<comment type="similarity">
    <text evidence="1">Belongs to the bacterial ribosomal protein bL36 family.</text>
</comment>
<keyword id="KW-0687">Ribonucleoprotein</keyword>
<keyword id="KW-0689">Ribosomal protein</keyword>
<gene>
    <name evidence="1" type="primary">rpmJ</name>
    <name type="ordered locus">Paes_2041</name>
</gene>
<sequence length="38" mass="4572">MKVYSSIKKRCEHCRIIKRKGKRFVICKVNPSHKQRQG</sequence>
<feature type="chain" id="PRO_1000101057" description="Large ribosomal subunit protein bL36">
    <location>
        <begin position="1"/>
        <end position="38"/>
    </location>
</feature>
<name>RL36_PROA2</name>
<evidence type="ECO:0000255" key="1">
    <source>
        <dbReference type="HAMAP-Rule" id="MF_00251"/>
    </source>
</evidence>
<evidence type="ECO:0000305" key="2"/>
<dbReference type="EMBL" id="CP001108">
    <property type="protein sequence ID" value="ACF47051.1"/>
    <property type="molecule type" value="Genomic_DNA"/>
</dbReference>
<dbReference type="RefSeq" id="WP_011889520.1">
    <property type="nucleotide sequence ID" value="NC_011059.1"/>
</dbReference>
<dbReference type="SMR" id="B4S5A5"/>
<dbReference type="STRING" id="290512.Paes_2041"/>
<dbReference type="KEGG" id="paa:Paes_2041"/>
<dbReference type="eggNOG" id="COG0257">
    <property type="taxonomic scope" value="Bacteria"/>
</dbReference>
<dbReference type="HOGENOM" id="CLU_135723_6_2_10"/>
<dbReference type="Proteomes" id="UP000002725">
    <property type="component" value="Chromosome"/>
</dbReference>
<dbReference type="GO" id="GO:1990904">
    <property type="term" value="C:ribonucleoprotein complex"/>
    <property type="evidence" value="ECO:0007669"/>
    <property type="project" value="UniProtKB-KW"/>
</dbReference>
<dbReference type="GO" id="GO:0005840">
    <property type="term" value="C:ribosome"/>
    <property type="evidence" value="ECO:0007669"/>
    <property type="project" value="UniProtKB-KW"/>
</dbReference>
<dbReference type="GO" id="GO:0003735">
    <property type="term" value="F:structural constituent of ribosome"/>
    <property type="evidence" value="ECO:0007669"/>
    <property type="project" value="InterPro"/>
</dbReference>
<dbReference type="GO" id="GO:0006412">
    <property type="term" value="P:translation"/>
    <property type="evidence" value="ECO:0007669"/>
    <property type="project" value="UniProtKB-UniRule"/>
</dbReference>
<dbReference type="HAMAP" id="MF_00251">
    <property type="entry name" value="Ribosomal_bL36"/>
    <property type="match status" value="1"/>
</dbReference>
<dbReference type="InterPro" id="IPR000473">
    <property type="entry name" value="Ribosomal_bL36"/>
</dbReference>
<dbReference type="InterPro" id="IPR035977">
    <property type="entry name" value="Ribosomal_bL36_sp"/>
</dbReference>
<dbReference type="InterPro" id="IPR052010">
    <property type="entry name" value="Ribosomal_LSU_bL36"/>
</dbReference>
<dbReference type="NCBIfam" id="TIGR01022">
    <property type="entry name" value="rpmJ_bact"/>
    <property type="match status" value="1"/>
</dbReference>
<dbReference type="PANTHER" id="PTHR18804">
    <property type="entry name" value="RIBOSOMAL PROTEIN"/>
    <property type="match status" value="1"/>
</dbReference>
<dbReference type="PANTHER" id="PTHR18804:SF16">
    <property type="entry name" value="RIBOSOMAL PROTEIN"/>
    <property type="match status" value="1"/>
</dbReference>
<dbReference type="Pfam" id="PF00444">
    <property type="entry name" value="Ribosomal_L36"/>
    <property type="match status" value="1"/>
</dbReference>
<dbReference type="SUPFAM" id="SSF57840">
    <property type="entry name" value="Ribosomal protein L36"/>
    <property type="match status" value="1"/>
</dbReference>
<dbReference type="PROSITE" id="PS00828">
    <property type="entry name" value="RIBOSOMAL_L36"/>
    <property type="match status" value="1"/>
</dbReference>
<proteinExistence type="inferred from homology"/>
<reference key="1">
    <citation type="submission" date="2008-06" db="EMBL/GenBank/DDBJ databases">
        <title>Complete sequence of chromosome of Prosthecochloris aestuarii DSM 271.</title>
        <authorList>
            <consortium name="US DOE Joint Genome Institute"/>
            <person name="Lucas S."/>
            <person name="Copeland A."/>
            <person name="Lapidus A."/>
            <person name="Glavina del Rio T."/>
            <person name="Dalin E."/>
            <person name="Tice H."/>
            <person name="Bruce D."/>
            <person name="Goodwin L."/>
            <person name="Pitluck S."/>
            <person name="Schmutz J."/>
            <person name="Larimer F."/>
            <person name="Land M."/>
            <person name="Hauser L."/>
            <person name="Kyrpides N."/>
            <person name="Anderson I."/>
            <person name="Liu Z."/>
            <person name="Li T."/>
            <person name="Zhao F."/>
            <person name="Overmann J."/>
            <person name="Bryant D.A."/>
            <person name="Richardson P."/>
        </authorList>
    </citation>
    <scope>NUCLEOTIDE SEQUENCE [LARGE SCALE GENOMIC DNA]</scope>
    <source>
        <strain>DSM 271 / SK 413</strain>
    </source>
</reference>
<protein>
    <recommendedName>
        <fullName evidence="1">Large ribosomal subunit protein bL36</fullName>
    </recommendedName>
    <alternativeName>
        <fullName evidence="2">50S ribosomal protein L36</fullName>
    </alternativeName>
</protein>
<accession>B4S5A5</accession>
<organism>
    <name type="scientific">Prosthecochloris aestuarii (strain DSM 271 / SK 413)</name>
    <dbReference type="NCBI Taxonomy" id="290512"/>
    <lineage>
        <taxon>Bacteria</taxon>
        <taxon>Pseudomonadati</taxon>
        <taxon>Chlorobiota</taxon>
        <taxon>Chlorobiia</taxon>
        <taxon>Chlorobiales</taxon>
        <taxon>Chlorobiaceae</taxon>
        <taxon>Prosthecochloris</taxon>
    </lineage>
</organism>